<feature type="chain" id="PRO_1000135718" description="3-isopropylmalate dehydratase large subunit">
    <location>
        <begin position="1"/>
        <end position="467"/>
    </location>
</feature>
<feature type="binding site" evidence="1">
    <location>
        <position position="347"/>
    </location>
    <ligand>
        <name>[4Fe-4S] cluster</name>
        <dbReference type="ChEBI" id="CHEBI:49883"/>
    </ligand>
</feature>
<feature type="binding site" evidence="1">
    <location>
        <position position="407"/>
    </location>
    <ligand>
        <name>[4Fe-4S] cluster</name>
        <dbReference type="ChEBI" id="CHEBI:49883"/>
    </ligand>
</feature>
<feature type="binding site" evidence="1">
    <location>
        <position position="410"/>
    </location>
    <ligand>
        <name>[4Fe-4S] cluster</name>
        <dbReference type="ChEBI" id="CHEBI:49883"/>
    </ligand>
</feature>
<reference key="1">
    <citation type="submission" date="2008-02" db="EMBL/GenBank/DDBJ databases">
        <title>Complete sequence of Synechococcus sp. PCC 7002.</title>
        <authorList>
            <person name="Li T."/>
            <person name="Zhao J."/>
            <person name="Zhao C."/>
            <person name="Liu Z."/>
            <person name="Zhao F."/>
            <person name="Marquardt J."/>
            <person name="Nomura C.T."/>
            <person name="Persson S."/>
            <person name="Detter J.C."/>
            <person name="Richardson P.M."/>
            <person name="Lanz C."/>
            <person name="Schuster S.C."/>
            <person name="Wang J."/>
            <person name="Li S."/>
            <person name="Huang X."/>
            <person name="Cai T."/>
            <person name="Yu Z."/>
            <person name="Luo J."/>
            <person name="Zhao J."/>
            <person name="Bryant D.A."/>
        </authorList>
    </citation>
    <scope>NUCLEOTIDE SEQUENCE [LARGE SCALE GENOMIC DNA]</scope>
    <source>
        <strain>ATCC 27264 / PCC 7002 / PR-6</strain>
    </source>
</reference>
<evidence type="ECO:0000255" key="1">
    <source>
        <dbReference type="HAMAP-Rule" id="MF_01026"/>
    </source>
</evidence>
<proteinExistence type="inferred from homology"/>
<accession>B1XLQ6</accession>
<organism>
    <name type="scientific">Picosynechococcus sp. (strain ATCC 27264 / PCC 7002 / PR-6)</name>
    <name type="common">Agmenellum quadruplicatum</name>
    <dbReference type="NCBI Taxonomy" id="32049"/>
    <lineage>
        <taxon>Bacteria</taxon>
        <taxon>Bacillati</taxon>
        <taxon>Cyanobacteriota</taxon>
        <taxon>Cyanophyceae</taxon>
        <taxon>Oscillatoriophycideae</taxon>
        <taxon>Chroococcales</taxon>
        <taxon>Geminocystaceae</taxon>
        <taxon>Picosynechococcus</taxon>
    </lineage>
</organism>
<name>LEUC_PICP2</name>
<sequence length="467" mass="50531">MSKGTLFDKVWDLHTVKVLPSGQTQLFIGLHLIHEVTSPQAFAMLRDRNLQVMYPERTVATVDHIVPTENQARPFADPLAEAMMQELEKNTATNKIRFYNVGSGGQGIVHVIAPEQGLTQPGMTVACGDSHTSTHGAFGAIAFGIGTSQVRDVLASQTLALAKLKVRKIEVNGDLQPGVYAKDVILHIIRKLGVKGGVGYAYEYAGTTFEKMSMEERMTVCNMSIEGGARCGYVNPDSVTYDYLKDRPFAPKGEAWEKAIAWWDSLRSEADAEYDDVVTFDAADIAPTVTWGITPGQGIGVDESVPTPEMMAEDEQAIAAEAYKYMQLQPGQAIQGTKIDVCFIGSCTNGRLSDLQEAAKYAKGHHVAPGVKAFVVPGSEQVKQQAEAEGLDRIFTEAGFEWREPGCSMCLAMNPDKLEGNQISASSSNRNFKGRQGSATGRTLLMSPAMVVAAAVTGQVTDVRTLN</sequence>
<gene>
    <name evidence="1" type="primary">leuC</name>
    <name type="ordered locus">SYNPCC7002_A1353</name>
</gene>
<keyword id="KW-0004">4Fe-4S</keyword>
<keyword id="KW-0028">Amino-acid biosynthesis</keyword>
<keyword id="KW-0100">Branched-chain amino acid biosynthesis</keyword>
<keyword id="KW-0408">Iron</keyword>
<keyword id="KW-0411">Iron-sulfur</keyword>
<keyword id="KW-0432">Leucine biosynthesis</keyword>
<keyword id="KW-0456">Lyase</keyword>
<keyword id="KW-0479">Metal-binding</keyword>
<keyword id="KW-1185">Reference proteome</keyword>
<dbReference type="EC" id="4.2.1.33" evidence="1"/>
<dbReference type="EMBL" id="CP000951">
    <property type="protein sequence ID" value="ACA99349.1"/>
    <property type="molecule type" value="Genomic_DNA"/>
</dbReference>
<dbReference type="RefSeq" id="WP_012306972.1">
    <property type="nucleotide sequence ID" value="NZ_JAHHPU010000001.1"/>
</dbReference>
<dbReference type="SMR" id="B1XLQ6"/>
<dbReference type="STRING" id="32049.SYNPCC7002_A1353"/>
<dbReference type="KEGG" id="syp:SYNPCC7002_A1353"/>
<dbReference type="eggNOG" id="COG0065">
    <property type="taxonomic scope" value="Bacteria"/>
</dbReference>
<dbReference type="HOGENOM" id="CLU_006714_3_4_3"/>
<dbReference type="UniPathway" id="UPA00048">
    <property type="reaction ID" value="UER00071"/>
</dbReference>
<dbReference type="Proteomes" id="UP000001688">
    <property type="component" value="Chromosome"/>
</dbReference>
<dbReference type="GO" id="GO:0003861">
    <property type="term" value="F:3-isopropylmalate dehydratase activity"/>
    <property type="evidence" value="ECO:0007669"/>
    <property type="project" value="UniProtKB-UniRule"/>
</dbReference>
<dbReference type="GO" id="GO:0051539">
    <property type="term" value="F:4 iron, 4 sulfur cluster binding"/>
    <property type="evidence" value="ECO:0007669"/>
    <property type="project" value="UniProtKB-KW"/>
</dbReference>
<dbReference type="GO" id="GO:0046872">
    <property type="term" value="F:metal ion binding"/>
    <property type="evidence" value="ECO:0007669"/>
    <property type="project" value="UniProtKB-KW"/>
</dbReference>
<dbReference type="GO" id="GO:0009098">
    <property type="term" value="P:L-leucine biosynthetic process"/>
    <property type="evidence" value="ECO:0007669"/>
    <property type="project" value="UniProtKB-UniRule"/>
</dbReference>
<dbReference type="CDD" id="cd01583">
    <property type="entry name" value="IPMI"/>
    <property type="match status" value="1"/>
</dbReference>
<dbReference type="Gene3D" id="3.30.499.10">
    <property type="entry name" value="Aconitase, domain 3"/>
    <property type="match status" value="2"/>
</dbReference>
<dbReference type="HAMAP" id="MF_01026">
    <property type="entry name" value="LeuC_type1"/>
    <property type="match status" value="1"/>
</dbReference>
<dbReference type="InterPro" id="IPR004430">
    <property type="entry name" value="3-IsopropMal_deHydase_lsu"/>
</dbReference>
<dbReference type="InterPro" id="IPR015931">
    <property type="entry name" value="Acnase/IPM_dHydase_lsu_aba_1/3"/>
</dbReference>
<dbReference type="InterPro" id="IPR001030">
    <property type="entry name" value="Acoase/IPM_deHydtase_lsu_aba"/>
</dbReference>
<dbReference type="InterPro" id="IPR018136">
    <property type="entry name" value="Aconitase_4Fe-4S_BS"/>
</dbReference>
<dbReference type="InterPro" id="IPR036008">
    <property type="entry name" value="Aconitase_4Fe-4S_dom"/>
</dbReference>
<dbReference type="InterPro" id="IPR050067">
    <property type="entry name" value="IPM_dehydratase_rel_enz"/>
</dbReference>
<dbReference type="InterPro" id="IPR033941">
    <property type="entry name" value="IPMI_cat"/>
</dbReference>
<dbReference type="NCBIfam" id="TIGR00170">
    <property type="entry name" value="leuC"/>
    <property type="match status" value="1"/>
</dbReference>
<dbReference type="NCBIfam" id="NF004016">
    <property type="entry name" value="PRK05478.1"/>
    <property type="match status" value="1"/>
</dbReference>
<dbReference type="NCBIfam" id="NF009116">
    <property type="entry name" value="PRK12466.1"/>
    <property type="match status" value="1"/>
</dbReference>
<dbReference type="PANTHER" id="PTHR43822:SF9">
    <property type="entry name" value="3-ISOPROPYLMALATE DEHYDRATASE"/>
    <property type="match status" value="1"/>
</dbReference>
<dbReference type="PANTHER" id="PTHR43822">
    <property type="entry name" value="HOMOACONITASE, MITOCHONDRIAL-RELATED"/>
    <property type="match status" value="1"/>
</dbReference>
<dbReference type="Pfam" id="PF00330">
    <property type="entry name" value="Aconitase"/>
    <property type="match status" value="1"/>
</dbReference>
<dbReference type="PRINTS" id="PR00415">
    <property type="entry name" value="ACONITASE"/>
</dbReference>
<dbReference type="SUPFAM" id="SSF53732">
    <property type="entry name" value="Aconitase iron-sulfur domain"/>
    <property type="match status" value="1"/>
</dbReference>
<dbReference type="PROSITE" id="PS00450">
    <property type="entry name" value="ACONITASE_1"/>
    <property type="match status" value="1"/>
</dbReference>
<dbReference type="PROSITE" id="PS01244">
    <property type="entry name" value="ACONITASE_2"/>
    <property type="match status" value="1"/>
</dbReference>
<comment type="function">
    <text evidence="1">Catalyzes the isomerization between 2-isopropylmalate and 3-isopropylmalate, via the formation of 2-isopropylmaleate.</text>
</comment>
<comment type="catalytic activity">
    <reaction evidence="1">
        <text>(2R,3S)-3-isopropylmalate = (2S)-2-isopropylmalate</text>
        <dbReference type="Rhea" id="RHEA:32287"/>
        <dbReference type="ChEBI" id="CHEBI:1178"/>
        <dbReference type="ChEBI" id="CHEBI:35121"/>
        <dbReference type="EC" id="4.2.1.33"/>
    </reaction>
</comment>
<comment type="cofactor">
    <cofactor evidence="1">
        <name>[4Fe-4S] cluster</name>
        <dbReference type="ChEBI" id="CHEBI:49883"/>
    </cofactor>
    <text evidence="1">Binds 1 [4Fe-4S] cluster per subunit.</text>
</comment>
<comment type="pathway">
    <text evidence="1">Amino-acid biosynthesis; L-leucine biosynthesis; L-leucine from 3-methyl-2-oxobutanoate: step 2/4.</text>
</comment>
<comment type="subunit">
    <text evidence="1">Heterodimer of LeuC and LeuD.</text>
</comment>
<comment type="similarity">
    <text evidence="1">Belongs to the aconitase/IPM isomerase family. LeuC type 1 subfamily.</text>
</comment>
<protein>
    <recommendedName>
        <fullName evidence="1">3-isopropylmalate dehydratase large subunit</fullName>
        <ecNumber evidence="1">4.2.1.33</ecNumber>
    </recommendedName>
    <alternativeName>
        <fullName evidence="1">Alpha-IPM isomerase</fullName>
        <shortName evidence="1">IPMI</shortName>
    </alternativeName>
    <alternativeName>
        <fullName evidence="1">Isopropylmalate isomerase</fullName>
    </alternativeName>
</protein>